<dbReference type="EC" id="5.4.3.8" evidence="1"/>
<dbReference type="EMBL" id="CP000611">
    <property type="protein sequence ID" value="ABQ72254.1"/>
    <property type="molecule type" value="Genomic_DNA"/>
</dbReference>
<dbReference type="RefSeq" id="WP_003402844.1">
    <property type="nucleotide sequence ID" value="NZ_CP016972.1"/>
</dbReference>
<dbReference type="SMR" id="A5TZQ4"/>
<dbReference type="KEGG" id="mra:MRA_0531"/>
<dbReference type="eggNOG" id="COG0001">
    <property type="taxonomic scope" value="Bacteria"/>
</dbReference>
<dbReference type="HOGENOM" id="CLU_016922_1_5_11"/>
<dbReference type="UniPathway" id="UPA00251">
    <property type="reaction ID" value="UER00317"/>
</dbReference>
<dbReference type="Proteomes" id="UP000001988">
    <property type="component" value="Chromosome"/>
</dbReference>
<dbReference type="GO" id="GO:0005737">
    <property type="term" value="C:cytoplasm"/>
    <property type="evidence" value="ECO:0007669"/>
    <property type="project" value="UniProtKB-SubCell"/>
</dbReference>
<dbReference type="GO" id="GO:0042286">
    <property type="term" value="F:glutamate-1-semialdehyde 2,1-aminomutase activity"/>
    <property type="evidence" value="ECO:0007669"/>
    <property type="project" value="UniProtKB-UniRule"/>
</dbReference>
<dbReference type="GO" id="GO:0030170">
    <property type="term" value="F:pyridoxal phosphate binding"/>
    <property type="evidence" value="ECO:0007669"/>
    <property type="project" value="InterPro"/>
</dbReference>
<dbReference type="GO" id="GO:0008483">
    <property type="term" value="F:transaminase activity"/>
    <property type="evidence" value="ECO:0007669"/>
    <property type="project" value="InterPro"/>
</dbReference>
<dbReference type="GO" id="GO:0006782">
    <property type="term" value="P:protoporphyrinogen IX biosynthetic process"/>
    <property type="evidence" value="ECO:0007669"/>
    <property type="project" value="UniProtKB-UniRule"/>
</dbReference>
<dbReference type="CDD" id="cd00610">
    <property type="entry name" value="OAT_like"/>
    <property type="match status" value="1"/>
</dbReference>
<dbReference type="FunFam" id="3.40.640.10:FF:000021">
    <property type="entry name" value="Glutamate-1-semialdehyde 2,1-aminomutase"/>
    <property type="match status" value="1"/>
</dbReference>
<dbReference type="Gene3D" id="3.90.1150.10">
    <property type="entry name" value="Aspartate Aminotransferase, domain 1"/>
    <property type="match status" value="1"/>
</dbReference>
<dbReference type="Gene3D" id="3.40.640.10">
    <property type="entry name" value="Type I PLP-dependent aspartate aminotransferase-like (Major domain)"/>
    <property type="match status" value="1"/>
</dbReference>
<dbReference type="HAMAP" id="MF_00375">
    <property type="entry name" value="HemL_aminotrans_3"/>
    <property type="match status" value="1"/>
</dbReference>
<dbReference type="InterPro" id="IPR004639">
    <property type="entry name" value="4pyrrol_synth_GluAld_NH2Trfase"/>
</dbReference>
<dbReference type="InterPro" id="IPR005814">
    <property type="entry name" value="Aminotrans_3"/>
</dbReference>
<dbReference type="InterPro" id="IPR049704">
    <property type="entry name" value="Aminotrans_3_PPA_site"/>
</dbReference>
<dbReference type="InterPro" id="IPR015424">
    <property type="entry name" value="PyrdxlP-dep_Trfase"/>
</dbReference>
<dbReference type="InterPro" id="IPR015421">
    <property type="entry name" value="PyrdxlP-dep_Trfase_major"/>
</dbReference>
<dbReference type="InterPro" id="IPR015422">
    <property type="entry name" value="PyrdxlP-dep_Trfase_small"/>
</dbReference>
<dbReference type="NCBIfam" id="TIGR00713">
    <property type="entry name" value="hemL"/>
    <property type="match status" value="1"/>
</dbReference>
<dbReference type="NCBIfam" id="NF000818">
    <property type="entry name" value="PRK00062.1"/>
    <property type="match status" value="1"/>
</dbReference>
<dbReference type="PANTHER" id="PTHR43713">
    <property type="entry name" value="GLUTAMATE-1-SEMIALDEHYDE 2,1-AMINOMUTASE"/>
    <property type="match status" value="1"/>
</dbReference>
<dbReference type="PANTHER" id="PTHR43713:SF3">
    <property type="entry name" value="GLUTAMATE-1-SEMIALDEHYDE 2,1-AMINOMUTASE 1, CHLOROPLASTIC-RELATED"/>
    <property type="match status" value="1"/>
</dbReference>
<dbReference type="Pfam" id="PF00202">
    <property type="entry name" value="Aminotran_3"/>
    <property type="match status" value="1"/>
</dbReference>
<dbReference type="SUPFAM" id="SSF53383">
    <property type="entry name" value="PLP-dependent transferases"/>
    <property type="match status" value="1"/>
</dbReference>
<dbReference type="PROSITE" id="PS00600">
    <property type="entry name" value="AA_TRANSFER_CLASS_3"/>
    <property type="match status" value="1"/>
</dbReference>
<sequence length="462" mass="47516">MGSTEQATSRVRGAARTSAQLFEAACSVIPGGVNSPVRAFTAVGGTPRFITEAHGCWLIDADGNRYVDLVCSWGPMILGHAHPAVVEAVAKAAARGLSFGAPTPAETQLAGEIIGRVAPVERIRLVNSGTEATMSAVRLARGFTGRAKIVKFSGCYHGHVDALLADAGSGVATLGLCDDPQRPASPRSQSSRGLPSSPGVTGAAAADTIVLPYNDIDAVQQTFARFGEQIAAVITEASPGNMGVVPPGPGFNAALRAITAEHGALLILDEVMTGFRVSRSGWYGIDPVPADLFAFGKVMSGGMPAAAFGGRAEVMQRLAPLGPVYQAGTLSGNPVAVAAGLATLRAADDAVYTALDANADRLAGLLSEALTDAVVPHQISRAGNMLSVFFGETPVTDFASARASQTWRYPAFFHAMLDAGVYPPCSAFEAWFVSAALDDAAFGRIANALPAAARAAAQERPA</sequence>
<proteinExistence type="inferred from homology"/>
<protein>
    <recommendedName>
        <fullName evidence="1">Glutamate-1-semialdehyde 2,1-aminomutase</fullName>
        <shortName evidence="1">GSA</shortName>
        <ecNumber evidence="1">5.4.3.8</ecNumber>
    </recommendedName>
    <alternativeName>
        <fullName evidence="1">Glutamate-1-semialdehyde aminotransferase</fullName>
        <shortName evidence="1">GSA-AT</shortName>
    </alternativeName>
</protein>
<gene>
    <name evidence="1" type="primary">hemL</name>
    <name type="ordered locus">MRA_0531</name>
</gene>
<reference key="1">
    <citation type="journal article" date="2008" name="PLoS ONE">
        <title>Genetic basis of virulence attenuation revealed by comparative genomic analysis of Mycobacterium tuberculosis strain H37Ra versus H37Rv.</title>
        <authorList>
            <person name="Zheng H."/>
            <person name="Lu L."/>
            <person name="Wang B."/>
            <person name="Pu S."/>
            <person name="Zhang X."/>
            <person name="Zhu G."/>
            <person name="Shi W."/>
            <person name="Zhang L."/>
            <person name="Wang H."/>
            <person name="Wang S."/>
            <person name="Zhao G."/>
            <person name="Zhang Y."/>
        </authorList>
    </citation>
    <scope>NUCLEOTIDE SEQUENCE [LARGE SCALE GENOMIC DNA]</scope>
    <source>
        <strain>ATCC 25177 / H37Ra</strain>
    </source>
</reference>
<feature type="chain" id="PRO_0000300926" description="Glutamate-1-semialdehyde 2,1-aminomutase">
    <location>
        <begin position="1"/>
        <end position="462"/>
    </location>
</feature>
<feature type="region of interest" description="Disordered" evidence="2">
    <location>
        <begin position="178"/>
        <end position="200"/>
    </location>
</feature>
<feature type="compositionally biased region" description="Low complexity" evidence="2">
    <location>
        <begin position="182"/>
        <end position="192"/>
    </location>
</feature>
<feature type="modified residue" description="N6-(pyridoxal phosphate)lysine" evidence="1">
    <location>
        <position position="297"/>
    </location>
</feature>
<keyword id="KW-0963">Cytoplasm</keyword>
<keyword id="KW-0413">Isomerase</keyword>
<keyword id="KW-0627">Porphyrin biosynthesis</keyword>
<keyword id="KW-0663">Pyridoxal phosphate</keyword>
<keyword id="KW-1185">Reference proteome</keyword>
<accession>A5TZQ4</accession>
<comment type="catalytic activity">
    <reaction evidence="1">
        <text>(S)-4-amino-5-oxopentanoate = 5-aminolevulinate</text>
        <dbReference type="Rhea" id="RHEA:14265"/>
        <dbReference type="ChEBI" id="CHEBI:57501"/>
        <dbReference type="ChEBI" id="CHEBI:356416"/>
        <dbReference type="EC" id="5.4.3.8"/>
    </reaction>
</comment>
<comment type="cofactor">
    <cofactor evidence="1">
        <name>pyridoxal 5'-phosphate</name>
        <dbReference type="ChEBI" id="CHEBI:597326"/>
    </cofactor>
</comment>
<comment type="pathway">
    <text evidence="1">Porphyrin-containing compound metabolism; protoporphyrin-IX biosynthesis; 5-aminolevulinate from L-glutamyl-tRNA(Glu): step 2/2.</text>
</comment>
<comment type="subunit">
    <text evidence="1">Homodimer.</text>
</comment>
<comment type="subcellular location">
    <subcellularLocation>
        <location evidence="1">Cytoplasm</location>
    </subcellularLocation>
</comment>
<comment type="similarity">
    <text evidence="1">Belongs to the class-III pyridoxal-phosphate-dependent aminotransferase family. HemL subfamily.</text>
</comment>
<name>GSA_MYCTA</name>
<evidence type="ECO:0000255" key="1">
    <source>
        <dbReference type="HAMAP-Rule" id="MF_00375"/>
    </source>
</evidence>
<evidence type="ECO:0000256" key="2">
    <source>
        <dbReference type="SAM" id="MobiDB-lite"/>
    </source>
</evidence>
<organism>
    <name type="scientific">Mycobacterium tuberculosis (strain ATCC 25177 / H37Ra)</name>
    <dbReference type="NCBI Taxonomy" id="419947"/>
    <lineage>
        <taxon>Bacteria</taxon>
        <taxon>Bacillati</taxon>
        <taxon>Actinomycetota</taxon>
        <taxon>Actinomycetes</taxon>
        <taxon>Mycobacteriales</taxon>
        <taxon>Mycobacteriaceae</taxon>
        <taxon>Mycobacterium</taxon>
        <taxon>Mycobacterium tuberculosis complex</taxon>
    </lineage>
</organism>